<accession>Q55FN5</accession>
<proteinExistence type="evidence at transcript level"/>
<evidence type="ECO:0000250" key="1"/>
<evidence type="ECO:0000256" key="2">
    <source>
        <dbReference type="SAM" id="MobiDB-lite"/>
    </source>
</evidence>
<evidence type="ECO:0000269" key="3">
    <source>
    </source>
</evidence>
<evidence type="ECO:0000305" key="4"/>
<sequence>MSTRKVSYFYDNEVGNHYYGPNHPMKPHRMRMTHDLVLNYGIYKKMQIFRPRKASELELTNFHSDDYINFLKLVTPDNMHDYSKQLVKFNVREDCPVFDGMYNFCQISSGGSIGCAVKVNSKESDVAINWAGGLHHAKKSEASGFCYTNDIVLSILELLKHHERVLYIDIDIHHGDGVEEAFYTTDRVMTVSFHKYGDYFPGTGDVKDIGADKGKYYSLNFPLKDGIDDESYQSIFRPIIRSVMDFYRPGAVVIQCGADSLTGDRLGCFNLTLRGHAQCIEFLKSFNVPLVVLGGGGYTIKNVARCWTYETSILVDSELKDELPYNDYLEYYGPEYRLHITPNNMENQNTKDYLEKLKIQLLENLRNLNHAPAAAHHDIPPDSFNYSDDEDDEDPDVRISEADRDKKVHHQGELSDSDEEDGRRNYSNGLEATSTSRRNQVSISAYDKERPSYNSRNNNNNNNNNNNNNNNNNNNSNNNNSHHHNEDADVDMDSG</sequence>
<reference key="1">
    <citation type="journal article" date="2005" name="Nature">
        <title>The genome of the social amoeba Dictyostelium discoideum.</title>
        <authorList>
            <person name="Eichinger L."/>
            <person name="Pachebat J.A."/>
            <person name="Gloeckner G."/>
            <person name="Rajandream M.A."/>
            <person name="Sucgang R."/>
            <person name="Berriman M."/>
            <person name="Song J."/>
            <person name="Olsen R."/>
            <person name="Szafranski K."/>
            <person name="Xu Q."/>
            <person name="Tunggal B."/>
            <person name="Kummerfeld S."/>
            <person name="Madera M."/>
            <person name="Konfortov B.A."/>
            <person name="Rivero F."/>
            <person name="Bankier A.T."/>
            <person name="Lehmann R."/>
            <person name="Hamlin N."/>
            <person name="Davies R."/>
            <person name="Gaudet P."/>
            <person name="Fey P."/>
            <person name="Pilcher K."/>
            <person name="Chen G."/>
            <person name="Saunders D."/>
            <person name="Sodergren E.J."/>
            <person name="Davis P."/>
            <person name="Kerhornou A."/>
            <person name="Nie X."/>
            <person name="Hall N."/>
            <person name="Anjard C."/>
            <person name="Hemphill L."/>
            <person name="Bason N."/>
            <person name="Farbrother P."/>
            <person name="Desany B."/>
            <person name="Just E."/>
            <person name="Morio T."/>
            <person name="Rost R."/>
            <person name="Churcher C.M."/>
            <person name="Cooper J."/>
            <person name="Haydock S."/>
            <person name="van Driessche N."/>
            <person name="Cronin A."/>
            <person name="Goodhead I."/>
            <person name="Muzny D.M."/>
            <person name="Mourier T."/>
            <person name="Pain A."/>
            <person name="Lu M."/>
            <person name="Harper D."/>
            <person name="Lindsay R."/>
            <person name="Hauser H."/>
            <person name="James K.D."/>
            <person name="Quiles M."/>
            <person name="Madan Babu M."/>
            <person name="Saito T."/>
            <person name="Buchrieser C."/>
            <person name="Wardroper A."/>
            <person name="Felder M."/>
            <person name="Thangavelu M."/>
            <person name="Johnson D."/>
            <person name="Knights A."/>
            <person name="Loulseged H."/>
            <person name="Mungall K.L."/>
            <person name="Oliver K."/>
            <person name="Price C."/>
            <person name="Quail M.A."/>
            <person name="Urushihara H."/>
            <person name="Hernandez J."/>
            <person name="Rabbinowitsch E."/>
            <person name="Steffen D."/>
            <person name="Sanders M."/>
            <person name="Ma J."/>
            <person name="Kohara Y."/>
            <person name="Sharp S."/>
            <person name="Simmonds M.N."/>
            <person name="Spiegler S."/>
            <person name="Tivey A."/>
            <person name="Sugano S."/>
            <person name="White B."/>
            <person name="Walker D."/>
            <person name="Woodward J.R."/>
            <person name="Winckler T."/>
            <person name="Tanaka Y."/>
            <person name="Shaulsky G."/>
            <person name="Schleicher M."/>
            <person name="Weinstock G.M."/>
            <person name="Rosenthal A."/>
            <person name="Cox E.C."/>
            <person name="Chisholm R.L."/>
            <person name="Gibbs R.A."/>
            <person name="Loomis W.F."/>
            <person name="Platzer M."/>
            <person name="Kay R.R."/>
            <person name="Williams J.G."/>
            <person name="Dear P.H."/>
            <person name="Noegel A.A."/>
            <person name="Barrell B.G."/>
            <person name="Kuspa A."/>
        </authorList>
    </citation>
    <scope>NUCLEOTIDE SEQUENCE [LARGE SCALE GENOMIC DNA]</scope>
    <source>
        <strain>AX4</strain>
    </source>
</reference>
<reference key="2">
    <citation type="journal article" date="2009" name="J. Mol. Biol.">
        <title>Histone deacetylases regulate multicellular development in the social amoeba Dictyostelium discoideum.</title>
        <authorList>
            <person name="Sawarkar R."/>
            <person name="Visweswariah S.S."/>
            <person name="Nellen W."/>
            <person name="Nanjundiah V."/>
        </authorList>
    </citation>
    <scope>DEVELOPMENTAL STAGE</scope>
</reference>
<comment type="function">
    <text evidence="1">Responsible for the deacetylation of lysine residues on the N-terminal part of the core histones (H2A, H2B, H3 and H4). Histone deacetylation plays an important role in transcriptional regulation, cell cycle progression and developmental events. Histone deacetylases act via the formation of large multiprotein complexes (By similarity).</text>
</comment>
<comment type="catalytic activity">
    <reaction>
        <text>N(6)-acetyl-L-lysyl-[histone] + H2O = L-lysyl-[histone] + acetate</text>
        <dbReference type="Rhea" id="RHEA:58196"/>
        <dbReference type="Rhea" id="RHEA-COMP:9845"/>
        <dbReference type="Rhea" id="RHEA-COMP:11338"/>
        <dbReference type="ChEBI" id="CHEBI:15377"/>
        <dbReference type="ChEBI" id="CHEBI:29969"/>
        <dbReference type="ChEBI" id="CHEBI:30089"/>
        <dbReference type="ChEBI" id="CHEBI:61930"/>
        <dbReference type="EC" id="3.5.1.98"/>
    </reaction>
</comment>
<comment type="subcellular location">
    <subcellularLocation>
        <location evidence="1">Nucleus</location>
    </subcellularLocation>
    <subcellularLocation>
        <location evidence="1">Cytoplasm</location>
    </subcellularLocation>
</comment>
<comment type="developmental stage">
    <text evidence="3">Expressed throughout growth and development.</text>
</comment>
<comment type="similarity">
    <text evidence="4">Belongs to the histone deacetylase family. HD type 1 subfamily.</text>
</comment>
<name>HDA11_DICDI</name>
<protein>
    <recommendedName>
        <fullName>Type-1 histone deacetylase 1</fullName>
        <shortName>DdHdaA</shortName>
        <ecNumber>3.5.1.98</ecNumber>
    </recommendedName>
</protein>
<keyword id="KW-0156">Chromatin regulator</keyword>
<keyword id="KW-0963">Cytoplasm</keyword>
<keyword id="KW-0378">Hydrolase</keyword>
<keyword id="KW-0479">Metal-binding</keyword>
<keyword id="KW-0539">Nucleus</keyword>
<keyword id="KW-1185">Reference proteome</keyword>
<keyword id="KW-0678">Repressor</keyword>
<keyword id="KW-0804">Transcription</keyword>
<keyword id="KW-0805">Transcription regulation</keyword>
<feature type="chain" id="PRO_0000331369" description="Type-1 histone deacetylase 1">
    <location>
        <begin position="1"/>
        <end position="495"/>
    </location>
</feature>
<feature type="region of interest" description="Disordered" evidence="2">
    <location>
        <begin position="372"/>
        <end position="495"/>
    </location>
</feature>
<feature type="compositionally biased region" description="Basic and acidic residues" evidence="2">
    <location>
        <begin position="396"/>
        <end position="413"/>
    </location>
</feature>
<feature type="compositionally biased region" description="Polar residues" evidence="2">
    <location>
        <begin position="425"/>
        <end position="443"/>
    </location>
</feature>
<feature type="compositionally biased region" description="Low complexity" evidence="2">
    <location>
        <begin position="454"/>
        <end position="480"/>
    </location>
</feature>
<feature type="active site" description="Proton acceptor" evidence="1">
    <location>
        <position position="136"/>
    </location>
</feature>
<feature type="binding site" evidence="1">
    <location>
        <position position="94"/>
    </location>
    <ligand>
        <name>substrate</name>
    </ligand>
</feature>
<feature type="binding site" evidence="1">
    <location>
        <position position="144"/>
    </location>
    <ligand>
        <name>substrate</name>
    </ligand>
</feature>
<feature type="binding site" evidence="1">
    <location>
        <position position="171"/>
    </location>
    <ligand>
        <name>a divalent metal cation</name>
        <dbReference type="ChEBI" id="CHEBI:60240"/>
    </ligand>
</feature>
<feature type="binding site" evidence="1">
    <location>
        <position position="173"/>
    </location>
    <ligand>
        <name>a divalent metal cation</name>
        <dbReference type="ChEBI" id="CHEBI:60240"/>
    </ligand>
</feature>
<feature type="binding site" evidence="1">
    <location>
        <position position="259"/>
    </location>
    <ligand>
        <name>a divalent metal cation</name>
        <dbReference type="ChEBI" id="CHEBI:60240"/>
    </ligand>
</feature>
<feature type="binding site" evidence="1">
    <location>
        <position position="298"/>
    </location>
    <ligand>
        <name>substrate</name>
    </ligand>
</feature>
<organism>
    <name type="scientific">Dictyostelium discoideum</name>
    <name type="common">Social amoeba</name>
    <dbReference type="NCBI Taxonomy" id="44689"/>
    <lineage>
        <taxon>Eukaryota</taxon>
        <taxon>Amoebozoa</taxon>
        <taxon>Evosea</taxon>
        <taxon>Eumycetozoa</taxon>
        <taxon>Dictyostelia</taxon>
        <taxon>Dictyosteliales</taxon>
        <taxon>Dictyosteliaceae</taxon>
        <taxon>Dictyostelium</taxon>
    </lineage>
</organism>
<gene>
    <name type="primary">hdaA</name>
    <name type="ORF">DDB_G0268024</name>
</gene>
<dbReference type="EC" id="3.5.1.98"/>
<dbReference type="EMBL" id="AAFI02000003">
    <property type="protein sequence ID" value="EAL73465.1"/>
    <property type="molecule type" value="Genomic_DNA"/>
</dbReference>
<dbReference type="RefSeq" id="XP_647498.1">
    <property type="nucleotide sequence ID" value="XM_642406.1"/>
</dbReference>
<dbReference type="SMR" id="Q55FN5"/>
<dbReference type="FunCoup" id="Q55FN5">
    <property type="interactions" value="975"/>
</dbReference>
<dbReference type="STRING" id="44689.Q55FN5"/>
<dbReference type="PaxDb" id="44689-DDB0234190"/>
<dbReference type="EnsemblProtists" id="EAL73465">
    <property type="protein sequence ID" value="EAL73465"/>
    <property type="gene ID" value="DDB_G0268024"/>
</dbReference>
<dbReference type="GeneID" id="8616305"/>
<dbReference type="KEGG" id="ddi:DDB_G0268024"/>
<dbReference type="dictyBase" id="DDB_G0268024">
    <property type="gene designation" value="hdaA"/>
</dbReference>
<dbReference type="VEuPathDB" id="AmoebaDB:DDB_G0268024"/>
<dbReference type="eggNOG" id="KOG1342">
    <property type="taxonomic scope" value="Eukaryota"/>
</dbReference>
<dbReference type="HOGENOM" id="CLU_007727_7_12_1"/>
<dbReference type="InParanoid" id="Q55FN5"/>
<dbReference type="OMA" id="GKIMEWY"/>
<dbReference type="PhylomeDB" id="Q55FN5"/>
<dbReference type="Reactome" id="R-DDI-1538133">
    <property type="pathway name" value="G0 and Early G1"/>
</dbReference>
<dbReference type="Reactome" id="R-DDI-2500257">
    <property type="pathway name" value="Resolution of Sister Chromatid Cohesion"/>
</dbReference>
<dbReference type="Reactome" id="R-DDI-3214815">
    <property type="pathway name" value="HDACs deacetylate histones"/>
</dbReference>
<dbReference type="Reactome" id="R-DDI-4551638">
    <property type="pathway name" value="SUMOylation of chromatin organization proteins"/>
</dbReference>
<dbReference type="Reactome" id="R-DDI-9701898">
    <property type="pathway name" value="STAT3 nuclear events downstream of ALK signaling"/>
</dbReference>
<dbReference type="PRO" id="PR:Q55FN5"/>
<dbReference type="Proteomes" id="UP000002195">
    <property type="component" value="Chromosome 1"/>
</dbReference>
<dbReference type="GO" id="GO:0005737">
    <property type="term" value="C:cytoplasm"/>
    <property type="evidence" value="ECO:0007669"/>
    <property type="project" value="UniProtKB-SubCell"/>
</dbReference>
<dbReference type="GO" id="GO:0000118">
    <property type="term" value="C:histone deacetylase complex"/>
    <property type="evidence" value="ECO:0007669"/>
    <property type="project" value="UniProtKB-ARBA"/>
</dbReference>
<dbReference type="GO" id="GO:0004407">
    <property type="term" value="F:histone deacetylase activity"/>
    <property type="evidence" value="ECO:0000318"/>
    <property type="project" value="GO_Central"/>
</dbReference>
<dbReference type="GO" id="GO:0141221">
    <property type="term" value="F:histone deacetylase activity, hydrolytic mechanism"/>
    <property type="evidence" value="ECO:0007669"/>
    <property type="project" value="UniProtKB-EC"/>
</dbReference>
<dbReference type="GO" id="GO:0046872">
    <property type="term" value="F:metal ion binding"/>
    <property type="evidence" value="ECO:0007669"/>
    <property type="project" value="UniProtKB-KW"/>
</dbReference>
<dbReference type="GO" id="GO:0031507">
    <property type="term" value="P:heterochromatin formation"/>
    <property type="evidence" value="ECO:0000318"/>
    <property type="project" value="GO_Central"/>
</dbReference>
<dbReference type="FunFam" id="3.40.800.20:FF:000036">
    <property type="entry name" value="Histone deacetylase"/>
    <property type="match status" value="1"/>
</dbReference>
<dbReference type="Gene3D" id="3.40.800.20">
    <property type="entry name" value="Histone deacetylase domain"/>
    <property type="match status" value="1"/>
</dbReference>
<dbReference type="InterPro" id="IPR050284">
    <property type="entry name" value="HDAC_PDAC"/>
</dbReference>
<dbReference type="InterPro" id="IPR000286">
    <property type="entry name" value="His_deacetylse"/>
</dbReference>
<dbReference type="InterPro" id="IPR003084">
    <property type="entry name" value="His_deacetylse_1"/>
</dbReference>
<dbReference type="InterPro" id="IPR023801">
    <property type="entry name" value="His_deacetylse_dom"/>
</dbReference>
<dbReference type="InterPro" id="IPR037138">
    <property type="entry name" value="His_deacetylse_dom_sf"/>
</dbReference>
<dbReference type="InterPro" id="IPR023696">
    <property type="entry name" value="Ureohydrolase_dom_sf"/>
</dbReference>
<dbReference type="PANTHER" id="PTHR10625:SF10">
    <property type="entry name" value="HISTONE DEACETYLASE HDAC1"/>
    <property type="match status" value="1"/>
</dbReference>
<dbReference type="PANTHER" id="PTHR10625">
    <property type="entry name" value="HISTONE DEACETYLASE HDAC1-RELATED"/>
    <property type="match status" value="1"/>
</dbReference>
<dbReference type="Pfam" id="PF00850">
    <property type="entry name" value="Hist_deacetyl"/>
    <property type="match status" value="1"/>
</dbReference>
<dbReference type="PIRSF" id="PIRSF037913">
    <property type="entry name" value="His_deacetylse_1"/>
    <property type="match status" value="1"/>
</dbReference>
<dbReference type="PRINTS" id="PR01270">
    <property type="entry name" value="HDASUPER"/>
</dbReference>
<dbReference type="PRINTS" id="PR01271">
    <property type="entry name" value="HISDACETLASE"/>
</dbReference>
<dbReference type="SUPFAM" id="SSF52768">
    <property type="entry name" value="Arginase/deacetylase"/>
    <property type="match status" value="1"/>
</dbReference>